<reference key="1">
    <citation type="journal article" date="2008" name="Genetics">
        <title>Sequential elimination of major-effect contributors identifies additional quantitative trait loci conditioning high-temperature growth in yeast.</title>
        <authorList>
            <person name="Sinha H."/>
            <person name="David L."/>
            <person name="Pascon R.C."/>
            <person name="Clauder-Muenster S."/>
            <person name="Krishnakumar S."/>
            <person name="Nguyen M."/>
            <person name="Shi G."/>
            <person name="Dean J."/>
            <person name="Davis R.W."/>
            <person name="Oefner P.J."/>
            <person name="McCusker J.H."/>
            <person name="Steinmetz L.M."/>
        </authorList>
    </citation>
    <scope>NUCLEOTIDE SEQUENCE [GENOMIC DNA]</scope>
    <scope>VARIANTS SER-162; LEU-241; GLY-331; SER-343; ILE-386; GLY-457; PRO-530; ASN-580; THR-621 AND PHE-942</scope>
    <source>
        <strain>ATCC 200060 / W303</strain>
        <strain>S103</strain>
        <strain>SK1</strain>
        <strain>V1-09</strain>
        <strain>YJM 1129</strain>
        <strain>YJM 269</strain>
        <strain>YJM 270</strain>
        <strain>YJM 320</strain>
        <strain>YJM 326</strain>
        <strain>YJM 339</strain>
        <strain>YJM 627</strain>
        <strain>YJM230</strain>
    </source>
</reference>
<reference key="2">
    <citation type="journal article" date="1997" name="Yeast">
        <title>The DNA sequence of cosmid 14-13b from chromosome XIV of Saccharomyces cerevisiae reveals an unusually high number of overlapping open reading frames.</title>
        <authorList>
            <person name="de Antoni A."/>
            <person name="D'Angelo M."/>
            <person name="Dal Pero F."/>
            <person name="Sartorello F."/>
            <person name="Pandolfo D."/>
            <person name="Pallavicini A."/>
            <person name="Lanfranchi G."/>
            <person name="Valle G."/>
        </authorList>
    </citation>
    <scope>NUCLEOTIDE SEQUENCE [GENOMIC DNA]</scope>
</reference>
<reference key="3">
    <citation type="journal article" date="1997" name="Nature">
        <title>The nucleotide sequence of Saccharomyces cerevisiae chromosome XIV and its evolutionary implications.</title>
        <authorList>
            <person name="Philippsen P."/>
            <person name="Kleine K."/>
            <person name="Poehlmann R."/>
            <person name="Duesterhoeft A."/>
            <person name="Hamberg K."/>
            <person name="Hegemann J.H."/>
            <person name="Obermaier B."/>
            <person name="Urrestarazu L.A."/>
            <person name="Aert R."/>
            <person name="Albermann K."/>
            <person name="Altmann R."/>
            <person name="Andre B."/>
            <person name="Baladron V."/>
            <person name="Ballesta J.P.G."/>
            <person name="Becam A.-M."/>
            <person name="Beinhauer J.D."/>
            <person name="Boskovic J."/>
            <person name="Buitrago M.J."/>
            <person name="Bussereau F."/>
            <person name="Coster F."/>
            <person name="Crouzet M."/>
            <person name="D'Angelo M."/>
            <person name="Dal Pero F."/>
            <person name="De Antoni A."/>
            <person name="del Rey F."/>
            <person name="Doignon F."/>
            <person name="Domdey H."/>
            <person name="Dubois E."/>
            <person name="Fiedler T.A."/>
            <person name="Fleig U."/>
            <person name="Floeth M."/>
            <person name="Fritz C."/>
            <person name="Gaillardin C."/>
            <person name="Garcia-Cantalejo J.M."/>
            <person name="Glansdorff N."/>
            <person name="Goffeau A."/>
            <person name="Gueldener U."/>
            <person name="Herbert C.J."/>
            <person name="Heumann K."/>
            <person name="Heuss-Neitzel D."/>
            <person name="Hilbert H."/>
            <person name="Hinni K."/>
            <person name="Iraqui Houssaini I."/>
            <person name="Jacquet M."/>
            <person name="Jimenez A."/>
            <person name="Jonniaux J.-L."/>
            <person name="Karpfinger-Hartl L."/>
            <person name="Lanfranchi G."/>
            <person name="Lepingle A."/>
            <person name="Levesque H."/>
            <person name="Lyck R."/>
            <person name="Maftahi M."/>
            <person name="Mallet L."/>
            <person name="Maurer C.T.C."/>
            <person name="Messenguy F."/>
            <person name="Mewes H.-W."/>
            <person name="Moestl D."/>
            <person name="Nasr F."/>
            <person name="Nicaud J.-M."/>
            <person name="Niedenthal R.K."/>
            <person name="Pandolfo D."/>
            <person name="Pierard A."/>
            <person name="Piravandi E."/>
            <person name="Planta R.J."/>
            <person name="Pohl T.M."/>
            <person name="Purnelle B."/>
            <person name="Rebischung C."/>
            <person name="Remacha M.A."/>
            <person name="Revuelta J.L."/>
            <person name="Rinke M."/>
            <person name="Saiz J.E."/>
            <person name="Sartorello F."/>
            <person name="Scherens B."/>
            <person name="Sen-Gupta M."/>
            <person name="Soler-Mira A."/>
            <person name="Urbanus J.H.M."/>
            <person name="Valle G."/>
            <person name="Van Dyck L."/>
            <person name="Verhasselt P."/>
            <person name="Vierendeels F."/>
            <person name="Vissers S."/>
            <person name="Voet M."/>
            <person name="Volckaert G."/>
            <person name="Wach A."/>
            <person name="Wambutt R."/>
            <person name="Wedler H."/>
            <person name="Zollner A."/>
            <person name="Hani J."/>
        </authorList>
    </citation>
    <scope>NUCLEOTIDE SEQUENCE [LARGE SCALE GENOMIC DNA]</scope>
    <source>
        <strain>ATCC 204508 / S288c</strain>
    </source>
</reference>
<reference key="4">
    <citation type="journal article" date="2014" name="G3 (Bethesda)">
        <title>The reference genome sequence of Saccharomyces cerevisiae: Then and now.</title>
        <authorList>
            <person name="Engel S.R."/>
            <person name="Dietrich F.S."/>
            <person name="Fisk D.G."/>
            <person name="Binkley G."/>
            <person name="Balakrishnan R."/>
            <person name="Costanzo M.C."/>
            <person name="Dwight S.S."/>
            <person name="Hitz B.C."/>
            <person name="Karra K."/>
            <person name="Nash R.S."/>
            <person name="Weng S."/>
            <person name="Wong E.D."/>
            <person name="Lloyd P."/>
            <person name="Skrzypek M.S."/>
            <person name="Miyasato S.R."/>
            <person name="Simison M."/>
            <person name="Cherry J.M."/>
        </authorList>
    </citation>
    <scope>GENOME REANNOTATION</scope>
    <source>
        <strain>ATCC 204508 / S288c</strain>
    </source>
</reference>
<reference key="5">
    <citation type="journal article" date="1996" name="Proc. Natl. Acad. Sci. U.S.A.">
        <title>Linking genome and proteome by mass spectrometry: large-scale identification of yeast proteins from two dimensional gels.</title>
        <authorList>
            <person name="Shevchenko A."/>
            <person name="Jensen O.N."/>
            <person name="Podtelejnikov A.V."/>
            <person name="Sagliocco F."/>
            <person name="Wilm M."/>
            <person name="Vorm O."/>
            <person name="Mortensen P."/>
            <person name="Shevchenko A."/>
            <person name="Boucherie H."/>
            <person name="Mann M."/>
        </authorList>
    </citation>
    <scope>IDENTIFICATION BY MASS SPECTROMETRY</scope>
</reference>
<reference key="6">
    <citation type="journal article" date="2003" name="Nature">
        <title>Global analysis of protein localization in budding yeast.</title>
        <authorList>
            <person name="Huh W.-K."/>
            <person name="Falvo J.V."/>
            <person name="Gerke L.C."/>
            <person name="Carroll A.S."/>
            <person name="Howson R.W."/>
            <person name="Weissman J.S."/>
            <person name="O'Shea E.K."/>
        </authorList>
    </citation>
    <scope>SUBCELLULAR LOCATION [LARGE SCALE ANALYSIS]</scope>
</reference>
<reference key="7">
    <citation type="journal article" date="2003" name="Nature">
        <title>Global analysis of protein expression in yeast.</title>
        <authorList>
            <person name="Ghaemmaghami S."/>
            <person name="Huh W.-K."/>
            <person name="Bower K."/>
            <person name="Howson R.W."/>
            <person name="Belle A."/>
            <person name="Dephoure N."/>
            <person name="O'Shea E.K."/>
            <person name="Weissman J.S."/>
        </authorList>
    </citation>
    <scope>LEVEL OF PROTEIN EXPRESSION [LARGE SCALE ANALYSIS]</scope>
</reference>
<reference key="8">
    <citation type="journal article" date="2004" name="J. Cell Sci.">
        <title>The S. cerevisiae HtrA-like protein Nma111p is a nuclear serine protease that mediates yeast apoptosis.</title>
        <authorList>
            <person name="Fahrenkrog B."/>
            <person name="Sauder U."/>
            <person name="Aebi U."/>
        </authorList>
    </citation>
    <scope>SUBCELLULAR LOCATION</scope>
    <scope>FUNCTION</scope>
    <scope>MUTAGENESIS OF SER-235</scope>
</reference>
<reference key="9">
    <citation type="journal article" date="2004" name="Mol. Cell. Proteomics">
        <title>Synergistic computational and experimental proteomics approaches for more accurate detection of active serine hydrolases in yeast.</title>
        <authorList>
            <person name="Baxter S.M."/>
            <person name="Rosenblum J.S."/>
            <person name="Knutson S."/>
            <person name="Nelson M.R."/>
            <person name="Montimurro J.S."/>
            <person name="Di Gennaro J.A."/>
            <person name="Speir J.A."/>
            <person name="Burbaum J.J."/>
            <person name="Fetrow J.S."/>
        </authorList>
    </citation>
    <scope>FUNCTION</scope>
</reference>
<reference key="10">
    <citation type="journal article" date="2006" name="J. Cell Sci.">
        <title>The inhibitor-of-apoptosis protein Bir1p protects against apoptosis in S. cerevisiae and is a substrate for the yeast homologue of Omi/HtrA2.</title>
        <authorList>
            <person name="Walter D."/>
            <person name="Wissing S."/>
            <person name="Madeo F."/>
            <person name="Fahrenkrog B."/>
        </authorList>
    </citation>
    <scope>FUNCTION</scope>
    <scope>MUTAGENESIS OF SER-235</scope>
    <scope>INTERACTION WITH BIR1</scope>
</reference>
<reference key="11">
    <citation type="journal article" date="2008" name="Mol. Cell. Proteomics">
        <title>A multidimensional chromatography technology for in-depth phosphoproteome analysis.</title>
        <authorList>
            <person name="Albuquerque C.P."/>
            <person name="Smolka M.B."/>
            <person name="Payne S.H."/>
            <person name="Bafna V."/>
            <person name="Eng J."/>
            <person name="Zhou H."/>
        </authorList>
    </citation>
    <scope>IDENTIFICATION BY MASS SPECTROMETRY [LARGE SCALE ANALYSIS]</scope>
</reference>
<reference key="12">
    <citation type="journal article" date="2009" name="Science">
        <title>Global analysis of Cdk1 substrate phosphorylation sites provides insights into evolution.</title>
        <authorList>
            <person name="Holt L.J."/>
            <person name="Tuch B.B."/>
            <person name="Villen J."/>
            <person name="Johnson A.D."/>
            <person name="Gygi S.P."/>
            <person name="Morgan D.O."/>
        </authorList>
    </citation>
    <scope>IDENTIFICATION BY MASS SPECTROMETRY [LARGE SCALE ANALYSIS]</scope>
</reference>
<reference key="13">
    <citation type="journal article" date="2012" name="Proc. Natl. Acad. Sci. U.S.A.">
        <title>N-terminal acetylome analyses and functional insights of the N-terminal acetyltransferase NatB.</title>
        <authorList>
            <person name="Van Damme P."/>
            <person name="Lasa M."/>
            <person name="Polevoda B."/>
            <person name="Gazquez C."/>
            <person name="Elosegui-Artola A."/>
            <person name="Kim D.S."/>
            <person name="De Juan-Pardo E."/>
            <person name="Demeyer K."/>
            <person name="Hole K."/>
            <person name="Larrea E."/>
            <person name="Timmerman E."/>
            <person name="Prieto J."/>
            <person name="Arnesen T."/>
            <person name="Sherman F."/>
            <person name="Gevaert K."/>
            <person name="Aldabe R."/>
        </authorList>
    </citation>
    <scope>IDENTIFICATION BY MASS SPECTROMETRY [LARGE SCALE ANALYSIS]</scope>
</reference>
<gene>
    <name type="primary">NMA111</name>
    <name type="synonym">YNM3</name>
    <name type="ordered locus">YNL123W</name>
    <name type="ORF">N1897</name>
</gene>
<feature type="chain" id="PRO_0000203429" description="Pro-apoptotic serine protease NMA111">
    <location>
        <begin position="1"/>
        <end position="997"/>
    </location>
</feature>
<feature type="domain" description="PDZ 1">
    <location>
        <begin position="300"/>
        <end position="378"/>
    </location>
</feature>
<feature type="domain" description="PDZ 2">
    <location>
        <begin position="779"/>
        <end position="854"/>
    </location>
</feature>
<feature type="region of interest" description="Disordered" evidence="2">
    <location>
        <begin position="1"/>
        <end position="43"/>
    </location>
</feature>
<feature type="region of interest" description="Serine protease">
    <location>
        <begin position="83"/>
        <end position="273"/>
    </location>
</feature>
<feature type="active site" description="Charge relay system" evidence="1">
    <location>
        <position position="121"/>
    </location>
</feature>
<feature type="active site" description="Charge relay system" evidence="1">
    <location>
        <position position="152"/>
    </location>
</feature>
<feature type="active site" description="Charge relay system" evidence="1">
    <location>
        <position position="235"/>
    </location>
</feature>
<feature type="sequence variant" description="In strain: YJM269, YJM270 and YJM1129." evidence="8">
    <original>N</original>
    <variation>S</variation>
    <location>
        <position position="162"/>
    </location>
</feature>
<feature type="sequence variant" description="In strain: YJM269 and YJM270." evidence="8">
    <original>V</original>
    <variation>L</variation>
    <location>
        <position position="241"/>
    </location>
</feature>
<feature type="sequence variant" description="In strain: YJM326." evidence="8">
    <original>E</original>
    <variation>G</variation>
    <location>
        <position position="331"/>
    </location>
</feature>
<feature type="sequence variant" description="In strain: YJM269 and YJM270." evidence="8">
    <original>T</original>
    <variation>S</variation>
    <location>
        <position position="343"/>
    </location>
</feature>
<feature type="sequence variant" description="In strain: YJM269, YJM270 and YJM1129." evidence="8">
    <original>T</original>
    <variation>I</variation>
    <location>
        <position position="386"/>
    </location>
</feature>
<feature type="sequence variant" description="In strain: YJM269 and YJM270." evidence="8">
    <original>D</original>
    <variation>G</variation>
    <location>
        <position position="457"/>
    </location>
</feature>
<feature type="sequence variant" description="In strain: YJM627." evidence="8">
    <original>S</original>
    <variation>P</variation>
    <location>
        <position position="530"/>
    </location>
</feature>
<feature type="sequence variant" description="In strain: YJM627." evidence="8">
    <original>K</original>
    <variation>N</variation>
    <location>
        <position position="580"/>
    </location>
</feature>
<feature type="sequence variant" description="In strain: YJM269 and YJM270." evidence="8">
    <original>A</original>
    <variation>T</variation>
    <location>
        <position position="621"/>
    </location>
</feature>
<feature type="sequence variant" description="In strain: YJM627." evidence="8">
    <original>P</original>
    <variation>F</variation>
    <location>
        <position position="942"/>
    </location>
</feature>
<feature type="mutagenesis site" description="Impairs BIR1 degradation and death-promoting activity." evidence="6 7">
    <original>S</original>
    <variation>C</variation>
    <location>
        <position position="235"/>
    </location>
</feature>
<protein>
    <recommendedName>
        <fullName>Pro-apoptotic serine protease NMA111</fullName>
        <ecNumber>3.4.21.-</ecNumber>
    </recommendedName>
    <alternativeName>
        <fullName>111 kDa nuclear mediator of apoptosis</fullName>
    </alternativeName>
</protein>
<comment type="function">
    <text evidence="5 6 7">Nuclear serine protease which mediates apoptosis through proteolysis of the apoptotic inhibitor BIR1.</text>
</comment>
<comment type="subunit">
    <text evidence="7">Interacts with BIR1.</text>
</comment>
<comment type="subcellular location">
    <subcellularLocation>
        <location evidence="3 6">Nucleus</location>
    </subcellularLocation>
</comment>
<comment type="miscellaneous">
    <text evidence="4">Present with 3150 molecules/cell in log phase SD medium.</text>
</comment>
<comment type="similarity">
    <text evidence="9">Belongs to the peptidase S1C family.</text>
</comment>
<name>NM111_YEAST</name>
<organism>
    <name type="scientific">Saccharomyces cerevisiae (strain ATCC 204508 / S288c)</name>
    <name type="common">Baker's yeast</name>
    <dbReference type="NCBI Taxonomy" id="559292"/>
    <lineage>
        <taxon>Eukaryota</taxon>
        <taxon>Fungi</taxon>
        <taxon>Dikarya</taxon>
        <taxon>Ascomycota</taxon>
        <taxon>Saccharomycotina</taxon>
        <taxon>Saccharomycetes</taxon>
        <taxon>Saccharomycetales</taxon>
        <taxon>Saccharomycetaceae</taxon>
        <taxon>Saccharomyces</taxon>
    </lineage>
</organism>
<proteinExistence type="evidence at protein level"/>
<evidence type="ECO:0000255" key="1"/>
<evidence type="ECO:0000256" key="2">
    <source>
        <dbReference type="SAM" id="MobiDB-lite"/>
    </source>
</evidence>
<evidence type="ECO:0000269" key="3">
    <source>
    </source>
</evidence>
<evidence type="ECO:0000269" key="4">
    <source>
    </source>
</evidence>
<evidence type="ECO:0000269" key="5">
    <source>
    </source>
</evidence>
<evidence type="ECO:0000269" key="6">
    <source>
    </source>
</evidence>
<evidence type="ECO:0000269" key="7">
    <source>
    </source>
</evidence>
<evidence type="ECO:0000269" key="8">
    <source>
    </source>
</evidence>
<evidence type="ECO:0000305" key="9"/>
<accession>P53920</accession>
<accession>B0KZR3</accession>
<accession>B0KZU0</accession>
<accession>B0KZX6</accession>
<accession>B0L003</accession>
<accession>B0L021</accession>
<accession>D6W160</accession>
<dbReference type="EC" id="3.4.21.-"/>
<dbReference type="EMBL" id="EF125216">
    <property type="protein sequence ID" value="ABN58534.1"/>
    <property type="molecule type" value="Genomic_DNA"/>
</dbReference>
<dbReference type="EMBL" id="EF125217">
    <property type="protein sequence ID" value="ABN58544.1"/>
    <property type="molecule type" value="Genomic_DNA"/>
</dbReference>
<dbReference type="EMBL" id="EF125218">
    <property type="protein sequence ID" value="ABN58553.1"/>
    <property type="molecule type" value="Genomic_DNA"/>
</dbReference>
<dbReference type="EMBL" id="EF125219">
    <property type="protein sequence ID" value="ABN58562.1"/>
    <property type="molecule type" value="Genomic_DNA"/>
</dbReference>
<dbReference type="EMBL" id="EF125220">
    <property type="protein sequence ID" value="ABN58571.1"/>
    <property type="molecule type" value="Genomic_DNA"/>
</dbReference>
<dbReference type="EMBL" id="EF125221">
    <property type="protein sequence ID" value="ABN58580.1"/>
    <property type="molecule type" value="Genomic_DNA"/>
</dbReference>
<dbReference type="EMBL" id="EF125222">
    <property type="protein sequence ID" value="ABN58589.1"/>
    <property type="molecule type" value="Genomic_DNA"/>
</dbReference>
<dbReference type="EMBL" id="EF125223">
    <property type="protein sequence ID" value="ABN58598.1"/>
    <property type="molecule type" value="Genomic_DNA"/>
</dbReference>
<dbReference type="EMBL" id="EF125224">
    <property type="protein sequence ID" value="ABN58607.1"/>
    <property type="molecule type" value="Genomic_DNA"/>
</dbReference>
<dbReference type="EMBL" id="EF125225">
    <property type="protein sequence ID" value="ABN58616.1"/>
    <property type="molecule type" value="Genomic_DNA"/>
</dbReference>
<dbReference type="EMBL" id="EF125226">
    <property type="protein sequence ID" value="ABN58625.1"/>
    <property type="molecule type" value="Genomic_DNA"/>
</dbReference>
<dbReference type="EMBL" id="EF125228">
    <property type="protein sequence ID" value="ABN58643.1"/>
    <property type="molecule type" value="Genomic_DNA"/>
</dbReference>
<dbReference type="EMBL" id="Z69382">
    <property type="protein sequence ID" value="CAA93384.1"/>
    <property type="molecule type" value="Genomic_DNA"/>
</dbReference>
<dbReference type="EMBL" id="Z71399">
    <property type="protein sequence ID" value="CAA96004.1"/>
    <property type="molecule type" value="Genomic_DNA"/>
</dbReference>
<dbReference type="EMBL" id="BK006947">
    <property type="protein sequence ID" value="DAA10426.1"/>
    <property type="molecule type" value="Genomic_DNA"/>
</dbReference>
<dbReference type="PIR" id="S63064">
    <property type="entry name" value="S63064"/>
</dbReference>
<dbReference type="RefSeq" id="NP_014276.1">
    <property type="nucleotide sequence ID" value="NM_001182961.1"/>
</dbReference>
<dbReference type="SMR" id="P53920"/>
<dbReference type="BioGRID" id="35704">
    <property type="interactions" value="89"/>
</dbReference>
<dbReference type="FunCoup" id="P53920">
    <property type="interactions" value="172"/>
</dbReference>
<dbReference type="IntAct" id="P53920">
    <property type="interactions" value="1"/>
</dbReference>
<dbReference type="STRING" id="4932.YNL123W"/>
<dbReference type="MEROPS" id="S01.434"/>
<dbReference type="iPTMnet" id="P53920"/>
<dbReference type="PaxDb" id="4932-YNL123W"/>
<dbReference type="PeptideAtlas" id="P53920"/>
<dbReference type="EnsemblFungi" id="YNL123W_mRNA">
    <property type="protein sequence ID" value="YNL123W"/>
    <property type="gene ID" value="YNL123W"/>
</dbReference>
<dbReference type="GeneID" id="855600"/>
<dbReference type="KEGG" id="sce:YNL123W"/>
<dbReference type="AGR" id="SGD:S000005067"/>
<dbReference type="SGD" id="S000005067">
    <property type="gene designation" value="NMA111"/>
</dbReference>
<dbReference type="VEuPathDB" id="FungiDB:YNL123W"/>
<dbReference type="eggNOG" id="KOG1421">
    <property type="taxonomic scope" value="Eukaryota"/>
</dbReference>
<dbReference type="HOGENOM" id="CLU_003212_0_0_1"/>
<dbReference type="InParanoid" id="P53920"/>
<dbReference type="OMA" id="FWGHCVF"/>
<dbReference type="OrthoDB" id="4217619at2759"/>
<dbReference type="BioCyc" id="YEAST:G3O-33144-MONOMER"/>
<dbReference type="BioGRID-ORCS" id="855600">
    <property type="hits" value="1 hit in 10 CRISPR screens"/>
</dbReference>
<dbReference type="PRO" id="PR:P53920"/>
<dbReference type="Proteomes" id="UP000002311">
    <property type="component" value="Chromosome XIV"/>
</dbReference>
<dbReference type="RNAct" id="P53920">
    <property type="molecule type" value="protein"/>
</dbReference>
<dbReference type="GO" id="GO:0005634">
    <property type="term" value="C:nucleus"/>
    <property type="evidence" value="ECO:0000314"/>
    <property type="project" value="SGD"/>
</dbReference>
<dbReference type="GO" id="GO:0004252">
    <property type="term" value="F:serine-type endopeptidase activity"/>
    <property type="evidence" value="ECO:0000315"/>
    <property type="project" value="SGD"/>
</dbReference>
<dbReference type="GO" id="GO:0008236">
    <property type="term" value="F:serine-type peptidase activity"/>
    <property type="evidence" value="ECO:0000314"/>
    <property type="project" value="SGD"/>
</dbReference>
<dbReference type="GO" id="GO:0006915">
    <property type="term" value="P:apoptotic process"/>
    <property type="evidence" value="ECO:0000315"/>
    <property type="project" value="SGD"/>
</dbReference>
<dbReference type="GO" id="GO:0034605">
    <property type="term" value="P:cellular response to heat"/>
    <property type="evidence" value="ECO:0000315"/>
    <property type="project" value="SGD"/>
</dbReference>
<dbReference type="GO" id="GO:0033554">
    <property type="term" value="P:cellular response to stress"/>
    <property type="evidence" value="ECO:0000315"/>
    <property type="project" value="SGD"/>
</dbReference>
<dbReference type="GO" id="GO:0006629">
    <property type="term" value="P:lipid metabolic process"/>
    <property type="evidence" value="ECO:0000315"/>
    <property type="project" value="SGD"/>
</dbReference>
<dbReference type="GO" id="GO:0043065">
    <property type="term" value="P:positive regulation of apoptotic process"/>
    <property type="evidence" value="ECO:0000318"/>
    <property type="project" value="GO_Central"/>
</dbReference>
<dbReference type="GO" id="GO:0030163">
    <property type="term" value="P:protein catabolic process"/>
    <property type="evidence" value="ECO:0000315"/>
    <property type="project" value="SGD"/>
</dbReference>
<dbReference type="GO" id="GO:0120174">
    <property type="term" value="P:stress-induced homeostatically regulated protein degradation pathway"/>
    <property type="evidence" value="ECO:0000315"/>
    <property type="project" value="SGD"/>
</dbReference>
<dbReference type="CDD" id="cd06786">
    <property type="entry name" value="cpPDZ1_ScNma111-like"/>
    <property type="match status" value="1"/>
</dbReference>
<dbReference type="CDD" id="cd10827">
    <property type="entry name" value="cpPDZ3_ScNma111-like"/>
    <property type="match status" value="1"/>
</dbReference>
<dbReference type="CDD" id="cd06719">
    <property type="entry name" value="PDZ2-4_Nma111p-like"/>
    <property type="match status" value="2"/>
</dbReference>
<dbReference type="FunFam" id="2.40.10.120:FF:000013">
    <property type="entry name" value="Pro-apoptotic serine protease NMA111"/>
    <property type="match status" value="1"/>
</dbReference>
<dbReference type="FunFam" id="2.40.10.120:FF:000014">
    <property type="entry name" value="Pro-apoptotic serine protease NMA111"/>
    <property type="match status" value="1"/>
</dbReference>
<dbReference type="Gene3D" id="2.30.42.10">
    <property type="match status" value="2"/>
</dbReference>
<dbReference type="Gene3D" id="2.40.10.120">
    <property type="match status" value="2"/>
</dbReference>
<dbReference type="InterPro" id="IPR001478">
    <property type="entry name" value="PDZ"/>
</dbReference>
<dbReference type="InterPro" id="IPR025926">
    <property type="entry name" value="PDZ-like_dom"/>
</dbReference>
<dbReference type="InterPro" id="IPR036034">
    <property type="entry name" value="PDZ_sf"/>
</dbReference>
<dbReference type="InterPro" id="IPR009003">
    <property type="entry name" value="Peptidase_S1_PA"/>
</dbReference>
<dbReference type="InterPro" id="IPR001940">
    <property type="entry name" value="Peptidase_S1C"/>
</dbReference>
<dbReference type="PANTHER" id="PTHR46366">
    <property type="entry name" value="PRO-APOPTOTIC SERINE PROTEASE NMA111"/>
    <property type="match status" value="1"/>
</dbReference>
<dbReference type="PANTHER" id="PTHR46366:SF8">
    <property type="entry name" value="PRO-APOPTOTIC SERINE PROTEASE NMA111"/>
    <property type="match status" value="1"/>
</dbReference>
<dbReference type="Pfam" id="PF00595">
    <property type="entry name" value="PDZ"/>
    <property type="match status" value="1"/>
</dbReference>
<dbReference type="Pfam" id="PF12812">
    <property type="entry name" value="PDZ_1"/>
    <property type="match status" value="2"/>
</dbReference>
<dbReference type="Pfam" id="PF13365">
    <property type="entry name" value="Trypsin_2"/>
    <property type="match status" value="1"/>
</dbReference>
<dbReference type="PRINTS" id="PR00834">
    <property type="entry name" value="PROTEASES2C"/>
</dbReference>
<dbReference type="SMART" id="SM00228">
    <property type="entry name" value="PDZ"/>
    <property type="match status" value="2"/>
</dbReference>
<dbReference type="SUPFAM" id="SSF50156">
    <property type="entry name" value="PDZ domain-like"/>
    <property type="match status" value="3"/>
</dbReference>
<dbReference type="SUPFAM" id="SSF50494">
    <property type="entry name" value="Trypsin-like serine proteases"/>
    <property type="match status" value="2"/>
</dbReference>
<sequence>MTISLSNIKKRDHSKISDGTSGESSLVKRKQLESATGDQEEEYTDHEIIIEPLHFANNNNTVLTDSENYLRWQNTISNVVKSVVSIHFSQVAPFDCDSALVSEATGFVVDAKLGIILTNRHVVGPGPFVGYVVFDNHEECDVIPIYRDPVHDFGFLKFDPKNIKYSKIKALTLKPSLAKVGSEIRVVGNDAGEKLSILAGFISRIDRNAPEYGELTYNDFNTEYIQAAASASGGSSGSPVVNIDGYAVALQAGGSTEASTDFFLPLDRILRALICIQTNKPITRGTIQVQWLLKPYDECRRLGLTSERESEARAKFPENIGLLVAETVLREGPGYDKIKEGDTLISINGETISSFMQVDKIQDENVGKEIQLVIQRGGVECTVTCTVGDLHAITPHRYVEVCGATFHELSYQMARFYALPVRGVFLSSASGSFNFDSKERVGWIVDSIDNKETPDLDTFIEIMKTIPDRKRVTVRYHHLTDQHSPLVTSIYIDRHWCNEFRVYTRNDTTGIWDYKNVADPLPADALKPRSAKIIPIPVNNEKVAKLSSSLCTVATMAAVPLDSLSADILKTSGLIIDAEKGYVLVSRRVVPHDCLDTFVTIADSLVVPATVEFLHPTHNFAIVKYDPELVKAPLITPKLSTTRMKRGDKLQFIGFTQNDRIVTSETTVTDISSVSIPSNLIPRYRATNLEAISIDCNVSTRCNSGILTDNDGTVRGLWLPFLGERLENKEKVYLMGLDIMDCREVIDILKNGGKPRVSIVDAGFGSISVLQARIRGVPEEWIMRMEHESNNRLQFITVSRVSYTEDKIHLETGDVILSVNGKLVTEMNDLNGVVSSADGILPSAMLDFKVVRDGNIVDLKIKTVEVQETDRFVIFAGSILQKPHHAVLQAMVDVPKGVYCTFRGESSPALQYGISATNFITHVNEIETPDLDTFLKVVKTIPDNSYCKMRLMTFDNVPFAISLKTNYHYFPTAELKRDNITHKWIEKEFTGNSQSEK</sequence>
<keyword id="KW-0053">Apoptosis</keyword>
<keyword id="KW-0378">Hydrolase</keyword>
<keyword id="KW-0539">Nucleus</keyword>
<keyword id="KW-0645">Protease</keyword>
<keyword id="KW-1185">Reference proteome</keyword>
<keyword id="KW-0677">Repeat</keyword>
<keyword id="KW-0720">Serine protease</keyword>